<proteinExistence type="inferred from homology"/>
<sequence>MKKILVLNGPNLNLLGTREPEQYGRDTLADVERLCQEAGAKHGVEIECRQSNHEGVLIDWIHEAGREVAAGHMLGVVMNPGAYTHTSIALHDAIKGASVPLIELHISNVHAREEFRHHSYISPAARGIIVGLGVKGYVLAIAALVP</sequence>
<feature type="chain" id="PRO_1000203680" description="3-dehydroquinate dehydratase">
    <location>
        <begin position="1"/>
        <end position="146"/>
    </location>
</feature>
<feature type="active site" description="Proton acceptor" evidence="1">
    <location>
        <position position="23"/>
    </location>
</feature>
<feature type="active site" description="Proton donor" evidence="1">
    <location>
        <position position="105"/>
    </location>
</feature>
<feature type="binding site" evidence="1">
    <location>
        <position position="79"/>
    </location>
    <ligand>
        <name>substrate</name>
    </ligand>
</feature>
<feature type="binding site" evidence="1">
    <location>
        <position position="85"/>
    </location>
    <ligand>
        <name>substrate</name>
    </ligand>
</feature>
<feature type="binding site" evidence="1">
    <location>
        <position position="92"/>
    </location>
    <ligand>
        <name>substrate</name>
    </ligand>
</feature>
<feature type="binding site" evidence="1">
    <location>
        <begin position="106"/>
        <end position="107"/>
    </location>
    <ligand>
        <name>substrate</name>
    </ligand>
</feature>
<feature type="binding site" evidence="1">
    <location>
        <position position="116"/>
    </location>
    <ligand>
        <name>substrate</name>
    </ligand>
</feature>
<feature type="site" description="Transition state stabilizer" evidence="1">
    <location>
        <position position="18"/>
    </location>
</feature>
<dbReference type="EC" id="4.2.1.10" evidence="1"/>
<dbReference type="EMBL" id="CP001635">
    <property type="protein sequence ID" value="ACS18357.1"/>
    <property type="molecule type" value="Genomic_DNA"/>
</dbReference>
<dbReference type="SMR" id="C5CU07"/>
<dbReference type="STRING" id="543728.Vapar_1707"/>
<dbReference type="KEGG" id="vap:Vapar_1707"/>
<dbReference type="eggNOG" id="COG0757">
    <property type="taxonomic scope" value="Bacteria"/>
</dbReference>
<dbReference type="HOGENOM" id="CLU_090968_2_0_4"/>
<dbReference type="OrthoDB" id="9790793at2"/>
<dbReference type="UniPathway" id="UPA00053">
    <property type="reaction ID" value="UER00086"/>
</dbReference>
<dbReference type="GO" id="GO:0003855">
    <property type="term" value="F:3-dehydroquinate dehydratase activity"/>
    <property type="evidence" value="ECO:0007669"/>
    <property type="project" value="UniProtKB-UniRule"/>
</dbReference>
<dbReference type="GO" id="GO:0008652">
    <property type="term" value="P:amino acid biosynthetic process"/>
    <property type="evidence" value="ECO:0007669"/>
    <property type="project" value="UniProtKB-KW"/>
</dbReference>
<dbReference type="GO" id="GO:0009073">
    <property type="term" value="P:aromatic amino acid family biosynthetic process"/>
    <property type="evidence" value="ECO:0007669"/>
    <property type="project" value="UniProtKB-KW"/>
</dbReference>
<dbReference type="GO" id="GO:0009423">
    <property type="term" value="P:chorismate biosynthetic process"/>
    <property type="evidence" value="ECO:0007669"/>
    <property type="project" value="UniProtKB-UniRule"/>
</dbReference>
<dbReference type="GO" id="GO:0019631">
    <property type="term" value="P:quinate catabolic process"/>
    <property type="evidence" value="ECO:0007669"/>
    <property type="project" value="TreeGrafter"/>
</dbReference>
<dbReference type="CDD" id="cd00466">
    <property type="entry name" value="DHQase_II"/>
    <property type="match status" value="1"/>
</dbReference>
<dbReference type="Gene3D" id="3.40.50.9100">
    <property type="entry name" value="Dehydroquinase, class II"/>
    <property type="match status" value="1"/>
</dbReference>
<dbReference type="HAMAP" id="MF_00169">
    <property type="entry name" value="AroQ"/>
    <property type="match status" value="1"/>
</dbReference>
<dbReference type="InterPro" id="IPR001874">
    <property type="entry name" value="DHquinase_II"/>
</dbReference>
<dbReference type="InterPro" id="IPR018509">
    <property type="entry name" value="DHquinase_II_CS"/>
</dbReference>
<dbReference type="InterPro" id="IPR036441">
    <property type="entry name" value="DHquinase_II_sf"/>
</dbReference>
<dbReference type="NCBIfam" id="TIGR01088">
    <property type="entry name" value="aroQ"/>
    <property type="match status" value="1"/>
</dbReference>
<dbReference type="NCBIfam" id="NF003805">
    <property type="entry name" value="PRK05395.1-2"/>
    <property type="match status" value="1"/>
</dbReference>
<dbReference type="NCBIfam" id="NF003806">
    <property type="entry name" value="PRK05395.1-3"/>
    <property type="match status" value="1"/>
</dbReference>
<dbReference type="NCBIfam" id="NF003807">
    <property type="entry name" value="PRK05395.1-4"/>
    <property type="match status" value="1"/>
</dbReference>
<dbReference type="PANTHER" id="PTHR21272">
    <property type="entry name" value="CATABOLIC 3-DEHYDROQUINASE"/>
    <property type="match status" value="1"/>
</dbReference>
<dbReference type="PANTHER" id="PTHR21272:SF3">
    <property type="entry name" value="CATABOLIC 3-DEHYDROQUINASE"/>
    <property type="match status" value="1"/>
</dbReference>
<dbReference type="Pfam" id="PF01220">
    <property type="entry name" value="DHquinase_II"/>
    <property type="match status" value="1"/>
</dbReference>
<dbReference type="PIRSF" id="PIRSF001399">
    <property type="entry name" value="DHquinase_II"/>
    <property type="match status" value="1"/>
</dbReference>
<dbReference type="SUPFAM" id="SSF52304">
    <property type="entry name" value="Type II 3-dehydroquinate dehydratase"/>
    <property type="match status" value="1"/>
</dbReference>
<dbReference type="PROSITE" id="PS01029">
    <property type="entry name" value="DEHYDROQUINASE_II"/>
    <property type="match status" value="1"/>
</dbReference>
<evidence type="ECO:0000255" key="1">
    <source>
        <dbReference type="HAMAP-Rule" id="MF_00169"/>
    </source>
</evidence>
<comment type="function">
    <text evidence="1">Catalyzes a trans-dehydration via an enolate intermediate.</text>
</comment>
<comment type="catalytic activity">
    <reaction evidence="1">
        <text>3-dehydroquinate = 3-dehydroshikimate + H2O</text>
        <dbReference type="Rhea" id="RHEA:21096"/>
        <dbReference type="ChEBI" id="CHEBI:15377"/>
        <dbReference type="ChEBI" id="CHEBI:16630"/>
        <dbReference type="ChEBI" id="CHEBI:32364"/>
        <dbReference type="EC" id="4.2.1.10"/>
    </reaction>
</comment>
<comment type="pathway">
    <text evidence="1">Metabolic intermediate biosynthesis; chorismate biosynthesis; chorismate from D-erythrose 4-phosphate and phosphoenolpyruvate: step 3/7.</text>
</comment>
<comment type="subunit">
    <text evidence="1">Homododecamer.</text>
</comment>
<comment type="similarity">
    <text evidence="1">Belongs to the type-II 3-dehydroquinase family.</text>
</comment>
<reference key="1">
    <citation type="journal article" date="2011" name="J. Bacteriol.">
        <title>Complete genome sequence of the metabolically versatile plant growth-promoting endophyte, Variovorax paradoxus S110.</title>
        <authorList>
            <person name="Han J.I."/>
            <person name="Choi H.K."/>
            <person name="Lee S.W."/>
            <person name="Orwin P.M."/>
            <person name="Kim J."/>
            <person name="Laroe S.L."/>
            <person name="Kim T.G."/>
            <person name="O'Neil J."/>
            <person name="Leadbetter J.R."/>
            <person name="Lee S.Y."/>
            <person name="Hur C.G."/>
            <person name="Spain J.C."/>
            <person name="Ovchinnikova G."/>
            <person name="Goodwin L."/>
            <person name="Han C."/>
        </authorList>
    </citation>
    <scope>NUCLEOTIDE SEQUENCE [LARGE SCALE GENOMIC DNA]</scope>
    <source>
        <strain>S110</strain>
    </source>
</reference>
<gene>
    <name evidence="1" type="primary">aroQ</name>
    <name type="ordered locus">Vapar_1707</name>
</gene>
<keyword id="KW-0028">Amino-acid biosynthesis</keyword>
<keyword id="KW-0057">Aromatic amino acid biosynthesis</keyword>
<keyword id="KW-0456">Lyase</keyword>
<organism>
    <name type="scientific">Variovorax paradoxus (strain S110)</name>
    <dbReference type="NCBI Taxonomy" id="543728"/>
    <lineage>
        <taxon>Bacteria</taxon>
        <taxon>Pseudomonadati</taxon>
        <taxon>Pseudomonadota</taxon>
        <taxon>Betaproteobacteria</taxon>
        <taxon>Burkholderiales</taxon>
        <taxon>Comamonadaceae</taxon>
        <taxon>Variovorax</taxon>
    </lineage>
</organism>
<protein>
    <recommendedName>
        <fullName evidence="1">3-dehydroquinate dehydratase</fullName>
        <shortName evidence="1">3-dehydroquinase</shortName>
        <ecNumber evidence="1">4.2.1.10</ecNumber>
    </recommendedName>
    <alternativeName>
        <fullName evidence="1">Type II DHQase</fullName>
    </alternativeName>
</protein>
<accession>C5CU07</accession>
<name>AROQ_VARPS</name>